<name>UGPA1_ENCCU</name>
<accession>Q8SSC5</accession>
<dbReference type="EC" id="2.7.7.9"/>
<dbReference type="EMBL" id="AL590443">
    <property type="protein sequence ID" value="CAD26174.1"/>
    <property type="molecule type" value="Genomic_DNA"/>
</dbReference>
<dbReference type="RefSeq" id="NP_597539.1">
    <property type="nucleotide sequence ID" value="NM_001040903.1"/>
</dbReference>
<dbReference type="SMR" id="Q8SSC5"/>
<dbReference type="FunCoup" id="Q8SSC5">
    <property type="interactions" value="146"/>
</dbReference>
<dbReference type="STRING" id="284813.Q8SSC5"/>
<dbReference type="GeneID" id="858701"/>
<dbReference type="KEGG" id="ecu:ECU03_0280"/>
<dbReference type="VEuPathDB" id="MicrosporidiaDB:ECU03_0280"/>
<dbReference type="HOGENOM" id="CLU_023632_3_0_1"/>
<dbReference type="InParanoid" id="Q8SSC5"/>
<dbReference type="OMA" id="KEYCFLS"/>
<dbReference type="OrthoDB" id="932129at2759"/>
<dbReference type="Proteomes" id="UP000000819">
    <property type="component" value="Chromosome III"/>
</dbReference>
<dbReference type="GO" id="GO:0046872">
    <property type="term" value="F:metal ion binding"/>
    <property type="evidence" value="ECO:0007669"/>
    <property type="project" value="UniProtKB-KW"/>
</dbReference>
<dbReference type="GO" id="GO:0003983">
    <property type="term" value="F:UTP:glucose-1-phosphate uridylyltransferase activity"/>
    <property type="evidence" value="ECO:0007669"/>
    <property type="project" value="UniProtKB-EC"/>
</dbReference>
<dbReference type="GO" id="GO:0006011">
    <property type="term" value="P:UDP-alpha-D-glucose metabolic process"/>
    <property type="evidence" value="ECO:0007669"/>
    <property type="project" value="InterPro"/>
</dbReference>
<dbReference type="CDD" id="cd00897">
    <property type="entry name" value="UGPase_euk"/>
    <property type="match status" value="1"/>
</dbReference>
<dbReference type="FunFam" id="2.160.10.10:FF:000001">
    <property type="entry name" value="UTP--glucose-1-phosphate uridylyltransferase"/>
    <property type="match status" value="1"/>
</dbReference>
<dbReference type="FunFam" id="3.90.550.10:FF:000002">
    <property type="entry name" value="UTP--glucose-1-phosphate uridylyltransferase"/>
    <property type="match status" value="1"/>
</dbReference>
<dbReference type="Gene3D" id="2.160.10.10">
    <property type="entry name" value="Hexapeptide repeat proteins"/>
    <property type="match status" value="1"/>
</dbReference>
<dbReference type="Gene3D" id="3.90.550.10">
    <property type="entry name" value="Spore Coat Polysaccharide Biosynthesis Protein SpsA, Chain A"/>
    <property type="match status" value="1"/>
</dbReference>
<dbReference type="InterPro" id="IPR029044">
    <property type="entry name" value="Nucleotide-diphossugar_trans"/>
</dbReference>
<dbReference type="InterPro" id="IPR002618">
    <property type="entry name" value="UDPGP_fam"/>
</dbReference>
<dbReference type="InterPro" id="IPR016267">
    <property type="entry name" value="UDPGP_trans"/>
</dbReference>
<dbReference type="PANTHER" id="PTHR43511">
    <property type="match status" value="1"/>
</dbReference>
<dbReference type="Pfam" id="PF01704">
    <property type="entry name" value="UDPGP"/>
    <property type="match status" value="1"/>
</dbReference>
<dbReference type="PIRSF" id="PIRSF000806">
    <property type="entry name" value="UDPGP"/>
    <property type="match status" value="1"/>
</dbReference>
<dbReference type="SUPFAM" id="SSF53448">
    <property type="entry name" value="Nucleotide-diphospho-sugar transferases"/>
    <property type="match status" value="1"/>
</dbReference>
<reference key="1">
    <citation type="journal article" date="2001" name="Nature">
        <title>Genome sequence and gene compaction of the eukaryote parasite Encephalitozoon cuniculi.</title>
        <authorList>
            <person name="Katinka M.D."/>
            <person name="Duprat S."/>
            <person name="Cornillot E."/>
            <person name="Metenier G."/>
            <person name="Thomarat F."/>
            <person name="Prensier G."/>
            <person name="Barbe V."/>
            <person name="Peyretaillade E."/>
            <person name="Brottier P."/>
            <person name="Wincker P."/>
            <person name="Delbac F."/>
            <person name="El Alaoui H."/>
            <person name="Peyret P."/>
            <person name="Saurin W."/>
            <person name="Gouy M."/>
            <person name="Weissenbach J."/>
            <person name="Vivares C.P."/>
        </authorList>
    </citation>
    <scope>NUCLEOTIDE SEQUENCE [LARGE SCALE GENOMIC DNA]</scope>
    <source>
        <strain>GB-M1</strain>
    </source>
</reference>
<reference key="2">
    <citation type="journal article" date="2006" name="Proteomics">
        <title>Proteomic analysis of the eukaryotic parasite Encephalitozoon cuniculi (microsporidia): a reference map for proteins expressed in late sporogonial stages.</title>
        <authorList>
            <person name="Brosson D."/>
            <person name="Kuhn L."/>
            <person name="Delbac F."/>
            <person name="Garin J."/>
            <person name="Vivares C.P."/>
            <person name="Texier C."/>
        </authorList>
    </citation>
    <scope>IDENTIFICATION BY MASS SPECTROMETRY [LARGE SCALE ANALYSIS]</scope>
    <scope>DEVELOPMENTAL STAGE</scope>
</reference>
<keyword id="KW-0460">Magnesium</keyword>
<keyword id="KW-0479">Metal-binding</keyword>
<keyword id="KW-0548">Nucleotidyltransferase</keyword>
<keyword id="KW-1185">Reference proteome</keyword>
<keyword id="KW-0808">Transferase</keyword>
<organism>
    <name type="scientific">Encephalitozoon cuniculi (strain GB-M1)</name>
    <name type="common">Microsporidian parasite</name>
    <dbReference type="NCBI Taxonomy" id="284813"/>
    <lineage>
        <taxon>Eukaryota</taxon>
        <taxon>Fungi</taxon>
        <taxon>Fungi incertae sedis</taxon>
        <taxon>Microsporidia</taxon>
        <taxon>Unikaryonidae</taxon>
        <taxon>Encephalitozoon</taxon>
    </lineage>
</organism>
<feature type="chain" id="PRO_0000381754" description="UTP--glucose-1-phosphate uridylyltransferase">
    <location>
        <begin position="1"/>
        <end position="492"/>
    </location>
</feature>
<feature type="region of interest" description="Oligomerization" evidence="1">
    <location>
        <begin position="441"/>
        <end position="492"/>
    </location>
</feature>
<feature type="active site" evidence="1">
    <location>
        <position position="379"/>
    </location>
</feature>
<feature type="binding site" evidence="3">
    <location>
        <begin position="110"/>
        <end position="113"/>
    </location>
    <ligand>
        <name>UTP</name>
        <dbReference type="ChEBI" id="CHEBI:46398"/>
    </ligand>
</feature>
<feature type="binding site" evidence="2">
    <location>
        <begin position="112"/>
        <end position="113"/>
    </location>
    <ligand>
        <name>substrate</name>
    </ligand>
</feature>
<feature type="binding site" evidence="1">
    <location>
        <position position="124"/>
    </location>
    <ligand>
        <name>Mg(2+)</name>
        <dbReference type="ChEBI" id="CHEBI:18420"/>
    </ligand>
</feature>
<feature type="binding site" evidence="3">
    <location>
        <position position="124"/>
    </location>
    <ligand>
        <name>UTP</name>
        <dbReference type="ChEBI" id="CHEBI:46398"/>
    </ligand>
</feature>
<feature type="binding site" evidence="3">
    <location>
        <position position="183"/>
    </location>
    <ligand>
        <name>UTP</name>
        <dbReference type="ChEBI" id="CHEBI:46398"/>
    </ligand>
</feature>
<feature type="binding site" evidence="3">
    <location>
        <position position="210"/>
    </location>
    <ligand>
        <name>UTP</name>
        <dbReference type="ChEBI" id="CHEBI:46398"/>
    </ligand>
</feature>
<feature type="binding site" evidence="2">
    <location>
        <position position="211"/>
    </location>
    <ligand>
        <name>substrate</name>
    </ligand>
</feature>
<feature type="binding site" evidence="2">
    <location>
        <begin position="239"/>
        <end position="241"/>
    </location>
    <ligand>
        <name>substrate</name>
    </ligand>
</feature>
<feature type="binding site" evidence="1">
    <location>
        <position position="241"/>
    </location>
    <ligand>
        <name>Mg(2+)</name>
        <dbReference type="ChEBI" id="CHEBI:18420"/>
    </ligand>
</feature>
<feature type="binding site" evidence="3">
    <location>
        <position position="241"/>
    </location>
    <ligand>
        <name>UTP</name>
        <dbReference type="ChEBI" id="CHEBI:46398"/>
    </ligand>
</feature>
<feature type="binding site" evidence="3">
    <location>
        <position position="379"/>
    </location>
    <ligand>
        <name>UTP</name>
        <dbReference type="ChEBI" id="CHEBI:46398"/>
    </ligand>
</feature>
<proteinExistence type="evidence at protein level"/>
<evidence type="ECO:0000250" key="1"/>
<evidence type="ECO:0000250" key="2">
    <source>
        <dbReference type="UniProtKB" id="Q16851"/>
    </source>
</evidence>
<evidence type="ECO:0000250" key="3">
    <source>
        <dbReference type="UniProtKB" id="Q9M9P3"/>
    </source>
</evidence>
<evidence type="ECO:0000269" key="4">
    <source>
    </source>
</evidence>
<evidence type="ECO:0000305" key="5"/>
<comment type="function">
    <text evidence="1">Plays a central role as a glucosyl donor in cellular metabolic pathways.</text>
</comment>
<comment type="catalytic activity">
    <reaction>
        <text>alpha-D-glucose 1-phosphate + UTP + H(+) = UDP-alpha-D-glucose + diphosphate</text>
        <dbReference type="Rhea" id="RHEA:19889"/>
        <dbReference type="ChEBI" id="CHEBI:15378"/>
        <dbReference type="ChEBI" id="CHEBI:33019"/>
        <dbReference type="ChEBI" id="CHEBI:46398"/>
        <dbReference type="ChEBI" id="CHEBI:58601"/>
        <dbReference type="ChEBI" id="CHEBI:58885"/>
        <dbReference type="EC" id="2.7.7.9"/>
    </reaction>
</comment>
<comment type="subunit">
    <text evidence="1">Homooctamer.</text>
</comment>
<comment type="developmental stage">
    <text evidence="4">Expressed in late sporogonial stages.</text>
</comment>
<comment type="similarity">
    <text evidence="5">Belongs to the UDPGP type 1 family.</text>
</comment>
<gene>
    <name type="primary">UGP1</name>
    <name type="ordered locus">ECU03_0280</name>
</gene>
<protein>
    <recommendedName>
        <fullName>UTP--glucose-1-phosphate uridylyltransferase</fullName>
        <ecNumber>2.7.7.9</ecNumber>
    </recommendedName>
    <alternativeName>
        <fullName>UDP-glucose pyrophosphorylase</fullName>
        <shortName>UDPGP</shortName>
        <shortName>UGPase</shortName>
    </alternativeName>
</protein>
<sequence length="492" mass="55910">MQESRSKESTLSGDEDKDVHRFLDEFDDKCTCKLLKEMKETLEGLKKSHPNPTNLDEFYRLFERYLRTRHEKIVWEKIRSPKDRIVQYNEIPEPTEKSKELLRKLAILKLNGGLGTTMGCVGPKSAITIKDGKNFIDLVVKQIRYLNSKYKIDVPLILMNSFNTEGMTDKIIFRYDGIKKFSQSKFPRISSETLLPVSPSHGDKGMYPPGHGDLFYSMKNSGMLEELLEGGYEYLFVSNIDNLASTVDLKLLEYFATNELGFLMEVTDKTRADVKGGTLIEYKGALRLLEIAQVPSNKKSEFTSFKKFTIFNTNNLWINLKEMKKKLEEGFFDLDIIENKKALDDETVIQLETAIGSAIKYFPNSCGVVVPRSRFLPVKTCSDLFLVESNLFVEKNGTLQLHPSRVPETCPTVKLIGENFSKIEKYEKCFKGIPDILELEVLTVSGNVLFGKNVVLKGTVIILADEKSKICVPDGSVLEDNIIYGNLPIIDH</sequence>